<protein>
    <recommendedName>
        <fullName evidence="3">Protein GRAVITROPIC IN THE LIGHT 1</fullName>
    </recommendedName>
</protein>
<sequence length="559" mass="62843">MLPGILLCSLNPRNHSKKKKSERESLETEPKDIDYWYSVQFNRDPPRFALKSENNNHHSRSKSGGDFCKKKKRGEMANKVSNFSDLIQRVTASCLLHPLSAGRQDLAVNRREEYDTEEEENEEEGEIQYEDALEKENGKDETIRAKNGRNGVSVETVQEMEMVMDEVFTAAAAMKRAYVALQEAHSPWDPEKMHDADMAMVAELRRIGSLRERFRRMRGTGSGGRRKNDAGRGMLREAVAPYEAVVKELKKEVKVKDTEIENLKEKVKVASMANGNGGKKHRLLSSRKVNCTTQIAVSPVPELFEMTMIQVKEASKSFTGILLSLMRAAHWDIAAAVRSIEAASASSDGMSASSFASSVQSSVPNQHAKFALESYICRKIFQGFDHETFYMDGSLSSLINPDQYRRDCFAQFKDMKAMDPMELLGILPTCHFGKFCSKKYLSIIHQKMEESLFGDSEQRELVVAGNHPRSQFYGEFLGLAKAVWLLHLLAFSLDPSPSHFEANRGAEFHSQYMESVVRFSDGRVPAGQVVGFPVCPGFKLSHQGKGSIIKSRVYLVPRA</sequence>
<evidence type="ECO:0000256" key="1">
    <source>
        <dbReference type="SAM" id="MobiDB-lite"/>
    </source>
</evidence>
<evidence type="ECO:0000269" key="2">
    <source>
    </source>
</evidence>
<evidence type="ECO:0000303" key="3">
    <source>
    </source>
</evidence>
<evidence type="ECO:0000305" key="4"/>
<evidence type="ECO:0000312" key="5">
    <source>
        <dbReference type="Araport" id="AT5G58960"/>
    </source>
</evidence>
<evidence type="ECO:0000312" key="6">
    <source>
        <dbReference type="EMBL" id="BAB09639.1"/>
    </source>
</evidence>
<comment type="function">
    <text evidence="2">Required for red (R) and far red (FR) light-induced and phytochrome-mediated deregulation of negative gravitropism leading to randomization of hypocotyl growth orientation.</text>
</comment>
<comment type="interaction">
    <interactant intactId="EBI-25519238">
        <id>F4KGE8</id>
    </interactant>
    <interactant intactId="EBI-4426649">
        <id>Q17TI5</id>
        <label>BRX</label>
    </interactant>
    <organismsDiffer>false</organismsDiffer>
    <experiments>3</experiments>
</comment>
<comment type="alternative products">
    <event type="alternative splicing"/>
    <isoform>
        <id>F4KGE8-1</id>
        <name>1</name>
        <sequence type="displayed"/>
    </isoform>
    <isoform>
        <id>F4KGE8-2</id>
        <name>2</name>
        <sequence type="described" ref="VSP_059012"/>
    </isoform>
</comment>
<comment type="disruption phenotype">
    <text evidence="2">Maintenance of negative gravitropic hypocotyls grow after exposure of seedlings to red (R) or far red (FR) light. Reduced seedlings viability.</text>
</comment>
<reference key="1">
    <citation type="journal article" date="2006" name="Plant J.">
        <title>Phytochrome-mediated agravitropism in Arabidopsis hypocotyls requires GIL1 and confers a fitness advantage.</title>
        <authorList>
            <person name="Allen T."/>
            <person name="Ingles P.J."/>
            <person name="Praekelt U."/>
            <person name="Smith H."/>
            <person name="Whitelam G.C."/>
        </authorList>
    </citation>
    <scope>NUCLEOTIDE SEQUENCE [GENOMIC DNA]</scope>
    <scope>FUNCTION</scope>
    <scope>DISRUPTION PHENOTYPE</scope>
    <source>
        <strain>cv. Columbia</strain>
        <strain>cv. Wassilewskija</strain>
    </source>
</reference>
<reference key="2">
    <citation type="journal article" date="1998" name="DNA Res.">
        <title>Structural analysis of Arabidopsis thaliana chromosome 5. VIII. Sequence features of the regions of 1,081,958 bp covered by seventeen physically assigned P1 and TAC clones.</title>
        <authorList>
            <person name="Asamizu E."/>
            <person name="Sato S."/>
            <person name="Kaneko T."/>
            <person name="Nakamura Y."/>
            <person name="Kotani H."/>
            <person name="Miyajima N."/>
            <person name="Tabata S."/>
        </authorList>
    </citation>
    <scope>NUCLEOTIDE SEQUENCE [LARGE SCALE GENOMIC DNA]</scope>
    <source>
        <strain>cv. Columbia</strain>
    </source>
</reference>
<reference key="3">
    <citation type="journal article" date="2017" name="Plant J.">
        <title>Araport11: a complete reannotation of the Arabidopsis thaliana reference genome.</title>
        <authorList>
            <person name="Cheng C.Y."/>
            <person name="Krishnakumar V."/>
            <person name="Chan A.P."/>
            <person name="Thibaud-Nissen F."/>
            <person name="Schobel S."/>
            <person name="Town C.D."/>
        </authorList>
    </citation>
    <scope>GENOME REANNOTATION</scope>
    <source>
        <strain>cv. Columbia</strain>
    </source>
</reference>
<reference key="4">
    <citation type="journal article" date="2002" name="Science">
        <title>Functional annotation of a full-length Arabidopsis cDNA collection.</title>
        <authorList>
            <person name="Seki M."/>
            <person name="Narusaka M."/>
            <person name="Kamiya A."/>
            <person name="Ishida J."/>
            <person name="Satou M."/>
            <person name="Sakurai T."/>
            <person name="Nakajima M."/>
            <person name="Enju A."/>
            <person name="Akiyama K."/>
            <person name="Oono Y."/>
            <person name="Muramatsu M."/>
            <person name="Hayashizaki Y."/>
            <person name="Kawai J."/>
            <person name="Carninci P."/>
            <person name="Itoh M."/>
            <person name="Ishii Y."/>
            <person name="Arakawa T."/>
            <person name="Shibata K."/>
            <person name="Shinagawa A."/>
            <person name="Shinozaki K."/>
        </authorList>
    </citation>
    <scope>NUCLEOTIDE SEQUENCE [LARGE SCALE MRNA] (ISOFORM 1)</scope>
    <source>
        <strain>cv. Columbia</strain>
    </source>
</reference>
<reference key="5">
    <citation type="journal article" date="2003" name="Science">
        <title>Empirical analysis of transcriptional activity in the Arabidopsis genome.</title>
        <authorList>
            <person name="Yamada K."/>
            <person name="Lim J."/>
            <person name="Dale J.M."/>
            <person name="Chen H."/>
            <person name="Shinn P."/>
            <person name="Palm C.J."/>
            <person name="Southwick A.M."/>
            <person name="Wu H.C."/>
            <person name="Kim C.J."/>
            <person name="Nguyen M."/>
            <person name="Pham P.K."/>
            <person name="Cheuk R.F."/>
            <person name="Karlin-Newmann G."/>
            <person name="Liu S.X."/>
            <person name="Lam B."/>
            <person name="Sakano H."/>
            <person name="Wu T."/>
            <person name="Yu G."/>
            <person name="Miranda M."/>
            <person name="Quach H.L."/>
            <person name="Tripp M."/>
            <person name="Chang C.H."/>
            <person name="Lee J.M."/>
            <person name="Toriumi M.J."/>
            <person name="Chan M.M."/>
            <person name="Tang C.C."/>
            <person name="Onodera C.S."/>
            <person name="Deng J.M."/>
            <person name="Akiyama K."/>
            <person name="Ansari Y."/>
            <person name="Arakawa T."/>
            <person name="Banh J."/>
            <person name="Banno F."/>
            <person name="Bowser L."/>
            <person name="Brooks S.Y."/>
            <person name="Carninci P."/>
            <person name="Chao Q."/>
            <person name="Choy N."/>
            <person name="Enju A."/>
            <person name="Goldsmith A.D."/>
            <person name="Gurjal M."/>
            <person name="Hansen N.F."/>
            <person name="Hayashizaki Y."/>
            <person name="Johnson-Hopson C."/>
            <person name="Hsuan V.W."/>
            <person name="Iida K."/>
            <person name="Karnes M."/>
            <person name="Khan S."/>
            <person name="Koesema E."/>
            <person name="Ishida J."/>
            <person name="Jiang P.X."/>
            <person name="Jones T."/>
            <person name="Kawai J."/>
            <person name="Kamiya A."/>
            <person name="Meyers C."/>
            <person name="Nakajima M."/>
            <person name="Narusaka M."/>
            <person name="Seki M."/>
            <person name="Sakurai T."/>
            <person name="Satou M."/>
            <person name="Tamse R."/>
            <person name="Vaysberg M."/>
            <person name="Wallender E.K."/>
            <person name="Wong C."/>
            <person name="Yamamura Y."/>
            <person name="Yuan S."/>
            <person name="Shinozaki K."/>
            <person name="Davis R.W."/>
            <person name="Theologis A."/>
            <person name="Ecker J.R."/>
        </authorList>
    </citation>
    <scope>NUCLEOTIDE SEQUENCE [LARGE SCALE MRNA] (ISOFORM 2)</scope>
    <source>
        <strain>cv. Columbia</strain>
    </source>
</reference>
<reference key="6">
    <citation type="journal article" date="2009" name="DNA Res.">
        <title>Analysis of multiple occurrences of alternative splicing events in Arabidopsis thaliana using novel sequenced full-length cDNAs.</title>
        <authorList>
            <person name="Iida K."/>
            <person name="Fukami-Kobayashi K."/>
            <person name="Toyoda A."/>
            <person name="Sakaki Y."/>
            <person name="Kobayashi M."/>
            <person name="Seki M."/>
            <person name="Shinozaki K."/>
        </authorList>
    </citation>
    <scope>NUCLEOTIDE SEQUENCE [LARGE SCALE MRNA] (ISOFORM 2)</scope>
    <source>
        <strain>cv. Columbia</strain>
    </source>
</reference>
<reference key="7">
    <citation type="journal article" date="2004" name="Biosci. Biotechnol. Biochem.">
        <title>Molecular characterization of the cytoplasmic interacting protein of the receptor kinase IRK expressed in the inflorescence and root apices of Arabidopsis.</title>
        <authorList>
            <person name="Hattan J."/>
            <person name="Kanamoto H."/>
            <person name="Takemura M."/>
            <person name="Yokota A."/>
            <person name="Kohchi T."/>
        </authorList>
    </citation>
    <scope>GENE FAMILY</scope>
</reference>
<organism>
    <name type="scientific">Arabidopsis thaliana</name>
    <name type="common">Mouse-ear cress</name>
    <dbReference type="NCBI Taxonomy" id="3702"/>
    <lineage>
        <taxon>Eukaryota</taxon>
        <taxon>Viridiplantae</taxon>
        <taxon>Streptophyta</taxon>
        <taxon>Embryophyta</taxon>
        <taxon>Tracheophyta</taxon>
        <taxon>Spermatophyta</taxon>
        <taxon>Magnoliopsida</taxon>
        <taxon>eudicotyledons</taxon>
        <taxon>Gunneridae</taxon>
        <taxon>Pentapetalae</taxon>
        <taxon>rosids</taxon>
        <taxon>malvids</taxon>
        <taxon>Brassicales</taxon>
        <taxon>Brassicaceae</taxon>
        <taxon>Camelineae</taxon>
        <taxon>Arabidopsis</taxon>
    </lineage>
</organism>
<dbReference type="EMBL" id="DQ395085">
    <property type="protein sequence ID" value="ABD59217.1"/>
    <property type="molecule type" value="Genomic_DNA"/>
</dbReference>
<dbReference type="EMBL" id="AB016885">
    <property type="protein sequence ID" value="BAB09639.1"/>
    <property type="molecule type" value="Genomic_DNA"/>
</dbReference>
<dbReference type="EMBL" id="CP002688">
    <property type="protein sequence ID" value="AED97121.1"/>
    <property type="molecule type" value="Genomic_DNA"/>
</dbReference>
<dbReference type="EMBL" id="CP002688">
    <property type="protein sequence ID" value="AED97122.1"/>
    <property type="molecule type" value="Genomic_DNA"/>
</dbReference>
<dbReference type="EMBL" id="CP002688">
    <property type="protein sequence ID" value="AED97123.1"/>
    <property type="molecule type" value="Genomic_DNA"/>
</dbReference>
<dbReference type="EMBL" id="AK118548">
    <property type="protein sequence ID" value="BAC43150.1"/>
    <property type="molecule type" value="mRNA"/>
</dbReference>
<dbReference type="EMBL" id="AY075634">
    <property type="protein sequence ID" value="AAL91642.1"/>
    <property type="molecule type" value="mRNA"/>
</dbReference>
<dbReference type="EMBL" id="BT002623">
    <property type="protein sequence ID" value="AAO11539.1"/>
    <property type="molecule type" value="mRNA"/>
</dbReference>
<dbReference type="EMBL" id="AK317383">
    <property type="protein sequence ID" value="BAH20054.1"/>
    <property type="molecule type" value="mRNA"/>
</dbReference>
<dbReference type="RefSeq" id="NP_001032100.1">
    <molecule id="F4KGE8-2"/>
    <property type="nucleotide sequence ID" value="NM_001037023.1"/>
</dbReference>
<dbReference type="RefSeq" id="NP_200704.2">
    <molecule id="F4KGE8-2"/>
    <property type="nucleotide sequence ID" value="NM_125286.6"/>
</dbReference>
<dbReference type="RefSeq" id="NP_851217.1">
    <molecule id="F4KGE8-1"/>
    <property type="nucleotide sequence ID" value="NM_180886.2"/>
</dbReference>
<dbReference type="SMR" id="F4KGE8"/>
<dbReference type="FunCoup" id="F4KGE8">
    <property type="interactions" value="762"/>
</dbReference>
<dbReference type="IntAct" id="F4KGE8">
    <property type="interactions" value="1"/>
</dbReference>
<dbReference type="STRING" id="3702.F4KGE8"/>
<dbReference type="iPTMnet" id="F4KGE8"/>
<dbReference type="PaxDb" id="3702-AT5G58960.1"/>
<dbReference type="ProteomicsDB" id="220763">
    <molecule id="F4KGE8-1"/>
</dbReference>
<dbReference type="EnsemblPlants" id="AT5G58960.1">
    <molecule id="F4KGE8-1"/>
    <property type="protein sequence ID" value="AT5G58960.1"/>
    <property type="gene ID" value="AT5G58960"/>
</dbReference>
<dbReference type="EnsemblPlants" id="AT5G58960.2">
    <molecule id="F4KGE8-2"/>
    <property type="protein sequence ID" value="AT5G58960.2"/>
    <property type="gene ID" value="AT5G58960"/>
</dbReference>
<dbReference type="EnsemblPlants" id="AT5G58960.3">
    <molecule id="F4KGE8-2"/>
    <property type="protein sequence ID" value="AT5G58960.3"/>
    <property type="gene ID" value="AT5G58960"/>
</dbReference>
<dbReference type="GeneID" id="836013"/>
<dbReference type="Gramene" id="AT5G58960.1">
    <molecule id="F4KGE8-1"/>
    <property type="protein sequence ID" value="AT5G58960.1"/>
    <property type="gene ID" value="AT5G58960"/>
</dbReference>
<dbReference type="Gramene" id="AT5G58960.2">
    <molecule id="F4KGE8-2"/>
    <property type="protein sequence ID" value="AT5G58960.2"/>
    <property type="gene ID" value="AT5G58960"/>
</dbReference>
<dbReference type="Gramene" id="AT5G58960.3">
    <molecule id="F4KGE8-2"/>
    <property type="protein sequence ID" value="AT5G58960.3"/>
    <property type="gene ID" value="AT5G58960"/>
</dbReference>
<dbReference type="KEGG" id="ath:AT5G58960"/>
<dbReference type="Araport" id="AT5G58960"/>
<dbReference type="TAIR" id="AT5G58960">
    <property type="gene designation" value="GIL1"/>
</dbReference>
<dbReference type="eggNOG" id="ENOG502QUFA">
    <property type="taxonomic scope" value="Eukaryota"/>
</dbReference>
<dbReference type="InParanoid" id="F4KGE8"/>
<dbReference type="OMA" id="GHIPGPI"/>
<dbReference type="OrthoDB" id="678887at2759"/>
<dbReference type="PRO" id="PR:F4KGE8"/>
<dbReference type="Proteomes" id="UP000006548">
    <property type="component" value="Chromosome 5"/>
</dbReference>
<dbReference type="ExpressionAtlas" id="F4KGE8">
    <property type="expression patterns" value="baseline and differential"/>
</dbReference>
<dbReference type="GO" id="GO:0009959">
    <property type="term" value="P:negative gravitropism"/>
    <property type="evidence" value="ECO:0000315"/>
    <property type="project" value="TAIR"/>
</dbReference>
<dbReference type="GO" id="GO:0009639">
    <property type="term" value="P:response to red or far red light"/>
    <property type="evidence" value="ECO:0000315"/>
    <property type="project" value="TAIR"/>
</dbReference>
<dbReference type="InterPro" id="IPR006943">
    <property type="entry name" value="DUF641_pln"/>
</dbReference>
<dbReference type="InterPro" id="IPR040225">
    <property type="entry name" value="GIL1-like"/>
</dbReference>
<dbReference type="InterPro" id="IPR056813">
    <property type="entry name" value="GIL1_IRKI_C"/>
</dbReference>
<dbReference type="PANTHER" id="PTHR31161">
    <property type="entry name" value="PROTEIN GRAVITROPIC IN THE LIGHT 1"/>
    <property type="match status" value="1"/>
</dbReference>
<dbReference type="Pfam" id="PF04859">
    <property type="entry name" value="DUF641"/>
    <property type="match status" value="1"/>
</dbReference>
<dbReference type="Pfam" id="PF24994">
    <property type="entry name" value="GIL1_IRKI_C"/>
    <property type="match status" value="1"/>
</dbReference>
<accession>F4KGE8</accession>
<accession>Q8GWZ0</accession>
<accession>Q9FIL5</accession>
<proteinExistence type="evidence at protein level"/>
<name>GIL1_ARATH</name>
<feature type="chain" id="PRO_0000440950" description="Protein GRAVITROPIC IN THE LIGHT 1">
    <location>
        <begin position="1"/>
        <end position="559"/>
    </location>
</feature>
<feature type="region of interest" description="Disordered" evidence="1">
    <location>
        <begin position="107"/>
        <end position="127"/>
    </location>
</feature>
<feature type="compositionally biased region" description="Acidic residues" evidence="1">
    <location>
        <begin position="114"/>
        <end position="127"/>
    </location>
</feature>
<feature type="splice variant" id="VSP_059012" description="In isoform 2.">
    <location>
        <begin position="1"/>
        <end position="75"/>
    </location>
</feature>
<feature type="sequence conflict" description="In Ref. 4; BAC43150." evidence="4" ref="4">
    <original>D</original>
    <variation>G</variation>
    <location>
        <position position="229"/>
    </location>
</feature>
<feature type="sequence conflict" description="In Ref. 4; BAC43150." evidence="4" ref="4">
    <original>V</original>
    <variation>A</variation>
    <location>
        <position position="297"/>
    </location>
</feature>
<feature type="sequence conflict" description="In Ref. 4; BAC43150." evidence="4" ref="4">
    <original>D</original>
    <variation>G</variation>
    <location>
        <position position="348"/>
    </location>
</feature>
<feature type="sequence conflict" description="In Ref. 4; BAC43150." evidence="4" ref="4">
    <original>S</original>
    <variation>G</variation>
    <location>
        <position position="394"/>
    </location>
</feature>
<keyword id="KW-0025">Alternative splicing</keyword>
<keyword id="KW-1185">Reference proteome</keyword>
<gene>
    <name evidence="3" type="primary">GIL1</name>
    <name evidence="5" type="ordered locus">At5g58960</name>
    <name evidence="6" type="ORF">K19M22.15</name>
</gene>